<proteinExistence type="inferred from homology"/>
<keyword id="KW-0963">Cytoplasm</keyword>
<keyword id="KW-0378">Hydrolase</keyword>
<keyword id="KW-1185">Reference proteome</keyword>
<keyword id="KW-0694">RNA-binding</keyword>
<keyword id="KW-0820">tRNA-binding</keyword>
<name>PTH_DICNV</name>
<sequence>MLKLIVGLGNPGEQYQKTRHNAGFWLLDQTAQDYSCRLRTEKKFFAEFGEIAINQQKIFLLKPQTFMNASGKSLAAVCRFYHIEPQQILIIHDELDLPEGKIKLKKSGGHGGHNGLRDIIAALASQDFYRLRIGIGRPENSTQVIDYVLKAPSATHMERLNESLSYGKKAIEKLITEGDEKAMHWLHSL</sequence>
<accession>A5EWU9</accession>
<gene>
    <name evidence="1" type="primary">pth</name>
    <name type="ordered locus">DNO_0063</name>
</gene>
<reference key="1">
    <citation type="journal article" date="2007" name="Nat. Biotechnol.">
        <title>Genome sequence and identification of candidate vaccine antigens from the animal pathogen Dichelobacter nodosus.</title>
        <authorList>
            <person name="Myers G.S.A."/>
            <person name="Parker D."/>
            <person name="Al-Hasani K."/>
            <person name="Kennan R.M."/>
            <person name="Seemann T."/>
            <person name="Ren Q."/>
            <person name="Badger J.H."/>
            <person name="Selengut J.D."/>
            <person name="Deboy R.T."/>
            <person name="Tettelin H."/>
            <person name="Boyce J.D."/>
            <person name="McCarl V.P."/>
            <person name="Han X."/>
            <person name="Nelson W.C."/>
            <person name="Madupu R."/>
            <person name="Mohamoud Y."/>
            <person name="Holley T."/>
            <person name="Fedorova N."/>
            <person name="Khouri H."/>
            <person name="Bottomley S.P."/>
            <person name="Whittington R.J."/>
            <person name="Adler B."/>
            <person name="Songer J.G."/>
            <person name="Rood J.I."/>
            <person name="Paulsen I.T."/>
        </authorList>
    </citation>
    <scope>NUCLEOTIDE SEQUENCE [LARGE SCALE GENOMIC DNA]</scope>
    <source>
        <strain>VCS1703A</strain>
    </source>
</reference>
<dbReference type="EC" id="3.1.1.29" evidence="1"/>
<dbReference type="EMBL" id="CP000513">
    <property type="protein sequence ID" value="ABQ13985.1"/>
    <property type="molecule type" value="Genomic_DNA"/>
</dbReference>
<dbReference type="RefSeq" id="WP_011927816.1">
    <property type="nucleotide sequence ID" value="NC_009446.1"/>
</dbReference>
<dbReference type="SMR" id="A5EWU9"/>
<dbReference type="STRING" id="246195.DNO_0063"/>
<dbReference type="KEGG" id="dno:DNO_0063"/>
<dbReference type="eggNOG" id="COG0193">
    <property type="taxonomic scope" value="Bacteria"/>
</dbReference>
<dbReference type="HOGENOM" id="CLU_062456_3_1_6"/>
<dbReference type="OrthoDB" id="9800507at2"/>
<dbReference type="Proteomes" id="UP000000248">
    <property type="component" value="Chromosome"/>
</dbReference>
<dbReference type="GO" id="GO:0005737">
    <property type="term" value="C:cytoplasm"/>
    <property type="evidence" value="ECO:0007669"/>
    <property type="project" value="UniProtKB-SubCell"/>
</dbReference>
<dbReference type="GO" id="GO:0004045">
    <property type="term" value="F:peptidyl-tRNA hydrolase activity"/>
    <property type="evidence" value="ECO:0007669"/>
    <property type="project" value="UniProtKB-UniRule"/>
</dbReference>
<dbReference type="GO" id="GO:0000049">
    <property type="term" value="F:tRNA binding"/>
    <property type="evidence" value="ECO:0007669"/>
    <property type="project" value="UniProtKB-UniRule"/>
</dbReference>
<dbReference type="GO" id="GO:0006515">
    <property type="term" value="P:protein quality control for misfolded or incompletely synthesized proteins"/>
    <property type="evidence" value="ECO:0007669"/>
    <property type="project" value="UniProtKB-UniRule"/>
</dbReference>
<dbReference type="GO" id="GO:0072344">
    <property type="term" value="P:rescue of stalled ribosome"/>
    <property type="evidence" value="ECO:0007669"/>
    <property type="project" value="UniProtKB-UniRule"/>
</dbReference>
<dbReference type="CDD" id="cd00462">
    <property type="entry name" value="PTH"/>
    <property type="match status" value="1"/>
</dbReference>
<dbReference type="FunFam" id="3.40.50.1470:FF:000001">
    <property type="entry name" value="Peptidyl-tRNA hydrolase"/>
    <property type="match status" value="1"/>
</dbReference>
<dbReference type="Gene3D" id="3.40.50.1470">
    <property type="entry name" value="Peptidyl-tRNA hydrolase"/>
    <property type="match status" value="1"/>
</dbReference>
<dbReference type="HAMAP" id="MF_00083">
    <property type="entry name" value="Pept_tRNA_hydro_bact"/>
    <property type="match status" value="1"/>
</dbReference>
<dbReference type="InterPro" id="IPR001328">
    <property type="entry name" value="Pept_tRNA_hydro"/>
</dbReference>
<dbReference type="InterPro" id="IPR018171">
    <property type="entry name" value="Pept_tRNA_hydro_CS"/>
</dbReference>
<dbReference type="InterPro" id="IPR036416">
    <property type="entry name" value="Pept_tRNA_hydro_sf"/>
</dbReference>
<dbReference type="NCBIfam" id="TIGR00447">
    <property type="entry name" value="pth"/>
    <property type="match status" value="1"/>
</dbReference>
<dbReference type="PANTHER" id="PTHR17224">
    <property type="entry name" value="PEPTIDYL-TRNA HYDROLASE"/>
    <property type="match status" value="1"/>
</dbReference>
<dbReference type="PANTHER" id="PTHR17224:SF1">
    <property type="entry name" value="PEPTIDYL-TRNA HYDROLASE"/>
    <property type="match status" value="1"/>
</dbReference>
<dbReference type="Pfam" id="PF01195">
    <property type="entry name" value="Pept_tRNA_hydro"/>
    <property type="match status" value="1"/>
</dbReference>
<dbReference type="SUPFAM" id="SSF53178">
    <property type="entry name" value="Peptidyl-tRNA hydrolase-like"/>
    <property type="match status" value="1"/>
</dbReference>
<dbReference type="PROSITE" id="PS01195">
    <property type="entry name" value="PEPT_TRNA_HYDROL_1"/>
    <property type="match status" value="1"/>
</dbReference>
<dbReference type="PROSITE" id="PS01196">
    <property type="entry name" value="PEPT_TRNA_HYDROL_2"/>
    <property type="match status" value="1"/>
</dbReference>
<organism>
    <name type="scientific">Dichelobacter nodosus (strain VCS1703A)</name>
    <dbReference type="NCBI Taxonomy" id="246195"/>
    <lineage>
        <taxon>Bacteria</taxon>
        <taxon>Pseudomonadati</taxon>
        <taxon>Pseudomonadota</taxon>
        <taxon>Gammaproteobacteria</taxon>
        <taxon>Cardiobacteriales</taxon>
        <taxon>Cardiobacteriaceae</taxon>
        <taxon>Dichelobacter</taxon>
    </lineage>
</organism>
<comment type="function">
    <text evidence="1">Hydrolyzes ribosome-free peptidyl-tRNAs (with 1 or more amino acids incorporated), which drop off the ribosome during protein synthesis, or as a result of ribosome stalling.</text>
</comment>
<comment type="function">
    <text evidence="1">Catalyzes the release of premature peptidyl moieties from peptidyl-tRNA molecules trapped in stalled 50S ribosomal subunits, and thus maintains levels of free tRNAs and 50S ribosomes.</text>
</comment>
<comment type="catalytic activity">
    <reaction evidence="1">
        <text>an N-acyl-L-alpha-aminoacyl-tRNA + H2O = an N-acyl-L-amino acid + a tRNA + H(+)</text>
        <dbReference type="Rhea" id="RHEA:54448"/>
        <dbReference type="Rhea" id="RHEA-COMP:10123"/>
        <dbReference type="Rhea" id="RHEA-COMP:13883"/>
        <dbReference type="ChEBI" id="CHEBI:15377"/>
        <dbReference type="ChEBI" id="CHEBI:15378"/>
        <dbReference type="ChEBI" id="CHEBI:59874"/>
        <dbReference type="ChEBI" id="CHEBI:78442"/>
        <dbReference type="ChEBI" id="CHEBI:138191"/>
        <dbReference type="EC" id="3.1.1.29"/>
    </reaction>
</comment>
<comment type="subunit">
    <text evidence="1">Monomer.</text>
</comment>
<comment type="subcellular location">
    <subcellularLocation>
        <location evidence="1">Cytoplasm</location>
    </subcellularLocation>
</comment>
<comment type="similarity">
    <text evidence="1">Belongs to the PTH family.</text>
</comment>
<protein>
    <recommendedName>
        <fullName evidence="1">Peptidyl-tRNA hydrolase</fullName>
        <shortName evidence="1">Pth</shortName>
        <ecNumber evidence="1">3.1.1.29</ecNumber>
    </recommendedName>
</protein>
<feature type="chain" id="PRO_1000071227" description="Peptidyl-tRNA hydrolase">
    <location>
        <begin position="1"/>
        <end position="189"/>
    </location>
</feature>
<feature type="active site" description="Proton acceptor" evidence="1">
    <location>
        <position position="20"/>
    </location>
</feature>
<feature type="binding site" evidence="1">
    <location>
        <position position="15"/>
    </location>
    <ligand>
        <name>tRNA</name>
        <dbReference type="ChEBI" id="CHEBI:17843"/>
    </ligand>
</feature>
<feature type="binding site" evidence="1">
    <location>
        <position position="66"/>
    </location>
    <ligand>
        <name>tRNA</name>
        <dbReference type="ChEBI" id="CHEBI:17843"/>
    </ligand>
</feature>
<feature type="binding site" evidence="1">
    <location>
        <position position="68"/>
    </location>
    <ligand>
        <name>tRNA</name>
        <dbReference type="ChEBI" id="CHEBI:17843"/>
    </ligand>
</feature>
<feature type="binding site" evidence="1">
    <location>
        <position position="114"/>
    </location>
    <ligand>
        <name>tRNA</name>
        <dbReference type="ChEBI" id="CHEBI:17843"/>
    </ligand>
</feature>
<feature type="site" description="Discriminates between blocked and unblocked aminoacyl-tRNA" evidence="1">
    <location>
        <position position="10"/>
    </location>
</feature>
<feature type="site" description="Stabilizes the basic form of H active site to accept a proton" evidence="1">
    <location>
        <position position="93"/>
    </location>
</feature>
<evidence type="ECO:0000255" key="1">
    <source>
        <dbReference type="HAMAP-Rule" id="MF_00083"/>
    </source>
</evidence>